<comment type="function">
    <text evidence="1">Involved in ammonia regulation of the GAP1 permease.</text>
</comment>
<comment type="induction">
    <text evidence="1">Repressed in presence of ammonia.</text>
</comment>
<protein>
    <recommendedName>
        <fullName>Ammonia regulation of amino acid uptake protein</fullName>
    </recommendedName>
</protein>
<organism>
    <name type="scientific">Saccharomyces cerevisiae (strain ATCC 204508 / S288c)</name>
    <name type="common">Baker's yeast</name>
    <dbReference type="NCBI Taxonomy" id="559292"/>
    <lineage>
        <taxon>Eukaryota</taxon>
        <taxon>Fungi</taxon>
        <taxon>Dikarya</taxon>
        <taxon>Ascomycota</taxon>
        <taxon>Saccharomycotina</taxon>
        <taxon>Saccharomycetes</taxon>
        <taxon>Saccharomycetales</taxon>
        <taxon>Saccharomycetaceae</taxon>
        <taxon>Saccharomyces</taxon>
    </lineage>
</organism>
<reference key="1">
    <citation type="journal article" date="1993" name="Mol. Microbiol.">
        <title>AUA1, a gene involved in ammonia regulation of amino acid transport in Saccharomyces cerevisiae.</title>
        <authorList>
            <person name="Sophianopoulou V."/>
            <person name="Diallinas G."/>
        </authorList>
    </citation>
    <scope>NUCLEOTIDE SEQUENCE [GENOMIC DNA]</scope>
    <scope>FUNCTION</scope>
    <scope>INDUCTION</scope>
</reference>
<reference key="2">
    <citation type="journal article" date="1995" name="Nat. Genet.">
        <title>Analysis of the nucleotide sequence of chromosome VI from Saccharomyces cerevisiae.</title>
        <authorList>
            <person name="Murakami Y."/>
            <person name="Naitou M."/>
            <person name="Hagiwara H."/>
            <person name="Shibata T."/>
            <person name="Ozawa M."/>
            <person name="Sasanuma S."/>
            <person name="Sasanuma M."/>
            <person name="Tsuchiya Y."/>
            <person name="Soeda E."/>
            <person name="Yokoyama K."/>
            <person name="Yamazaki M."/>
            <person name="Tashiro H."/>
            <person name="Eki T."/>
        </authorList>
    </citation>
    <scope>NUCLEOTIDE SEQUENCE [LARGE SCALE GENOMIC DNA]</scope>
    <source>
        <strain>ATCC 204508 / S288c</strain>
    </source>
</reference>
<reference key="3">
    <citation type="journal article" date="2014" name="G3 (Bethesda)">
        <title>The reference genome sequence of Saccharomyces cerevisiae: Then and now.</title>
        <authorList>
            <person name="Engel S.R."/>
            <person name="Dietrich F.S."/>
            <person name="Fisk D.G."/>
            <person name="Binkley G."/>
            <person name="Balakrishnan R."/>
            <person name="Costanzo M.C."/>
            <person name="Dwight S.S."/>
            <person name="Hitz B.C."/>
            <person name="Karra K."/>
            <person name="Nash R.S."/>
            <person name="Weng S."/>
            <person name="Wong E.D."/>
            <person name="Lloyd P."/>
            <person name="Skrzypek M.S."/>
            <person name="Miyasato S.R."/>
            <person name="Simison M."/>
            <person name="Cherry J.M."/>
        </authorList>
    </citation>
    <scope>GENOME REANNOTATION</scope>
    <source>
        <strain>ATCC 204508 / S288c</strain>
    </source>
</reference>
<reference key="4">
    <citation type="submission" date="1994-09" db="EMBL/GenBank/DDBJ databases">
        <authorList>
            <person name="Barrell B.G."/>
            <person name="Churcher C."/>
            <person name="Rajandream M.A."/>
        </authorList>
    </citation>
    <scope>NUCLEOTIDE SEQUENCE [GENOMIC DNA]</scope>
    <source>
        <strain>ATCC 204511 / S288c / AB972</strain>
    </source>
</reference>
<evidence type="ECO:0000269" key="1">
    <source>
    </source>
</evidence>
<sequence length="94" mass="11722">MDRSLQVYICMYPYLDGSKQYRFDELISFYRPCPKSLDNIKSHYRQIHHQIRRRTHQHHQIRRRTHQHHHRSNCSRQRQCLVRHSCGRQMRVLA</sequence>
<feature type="chain" id="PRO_0000064762" description="Ammonia regulation of amino acid uptake protein">
    <location>
        <begin position="1"/>
        <end position="94"/>
    </location>
</feature>
<feature type="repeat">
    <location>
        <begin position="48"/>
        <end position="57"/>
    </location>
</feature>
<feature type="repeat">
    <location>
        <begin position="58"/>
        <end position="67"/>
    </location>
</feature>
<keyword id="KW-1185">Reference proteome</keyword>
<keyword id="KW-0677">Repeat</keyword>
<name>AUA1_YEAST</name>
<gene>
    <name type="primary">AUA1</name>
    <name type="ordered locus">YFL010W-A</name>
    <name type="ORF">YFL010BW</name>
</gene>
<proteinExistence type="evidence at transcript level"/>
<accession>P32450</accession>
<accession>D6VTL9</accession>
<dbReference type="EMBL" id="X69158">
    <property type="protein sequence ID" value="CAA48910.1"/>
    <property type="molecule type" value="Genomic_DNA"/>
</dbReference>
<dbReference type="EMBL" id="D50617">
    <property type="status" value="NOT_ANNOTATED_CDS"/>
    <property type="molecule type" value="Genomic_DNA"/>
</dbReference>
<dbReference type="EMBL" id="Z46255">
    <property type="protein sequence ID" value="CAA86343.1"/>
    <property type="molecule type" value="Genomic_DNA"/>
</dbReference>
<dbReference type="EMBL" id="BK006940">
    <property type="protein sequence ID" value="DAA12429.1"/>
    <property type="molecule type" value="Genomic_DNA"/>
</dbReference>
<dbReference type="PIR" id="S32939">
    <property type="entry name" value="S32939"/>
</dbReference>
<dbReference type="RefSeq" id="NP_116645.1">
    <property type="nucleotide sequence ID" value="NM_001180024.1"/>
</dbReference>
<dbReference type="SMR" id="P32450"/>
<dbReference type="BioGRID" id="31136">
    <property type="interactions" value="46"/>
</dbReference>
<dbReference type="DIP" id="DIP-5756N"/>
<dbReference type="FunCoup" id="P32450">
    <property type="interactions" value="36"/>
</dbReference>
<dbReference type="IntAct" id="P32450">
    <property type="interactions" value="1"/>
</dbReference>
<dbReference type="MINT" id="P32450"/>
<dbReference type="STRING" id="4932.YFL010W-A"/>
<dbReference type="CarbonylDB" id="P32450"/>
<dbReference type="PaxDb" id="4932-YFL010W-A"/>
<dbReference type="EnsemblFungi" id="YFL010W-A_mRNA">
    <property type="protein sequence ID" value="YFL010W-A"/>
    <property type="gene ID" value="YFL010W-A"/>
</dbReference>
<dbReference type="GeneID" id="850537"/>
<dbReference type="KEGG" id="sce:YFL010W-A"/>
<dbReference type="AGR" id="SGD:S000001955"/>
<dbReference type="SGD" id="S000001955">
    <property type="gene designation" value="AUA1"/>
</dbReference>
<dbReference type="VEuPathDB" id="FungiDB:YFL010W-A"/>
<dbReference type="HOGENOM" id="CLU_2528734_0_0_1"/>
<dbReference type="InParanoid" id="P32450"/>
<dbReference type="BioCyc" id="YEAST:G3O-30500-MONOMER"/>
<dbReference type="BioGRID-ORCS" id="850537">
    <property type="hits" value="3 hits in 10 CRISPR screens"/>
</dbReference>
<dbReference type="PRO" id="PR:P32450"/>
<dbReference type="Proteomes" id="UP000002311">
    <property type="component" value="Chromosome VI"/>
</dbReference>
<dbReference type="RNAct" id="P32450">
    <property type="molecule type" value="protein"/>
</dbReference>
<dbReference type="GO" id="GO:0006865">
    <property type="term" value="P:amino acid transport"/>
    <property type="evidence" value="ECO:0000315"/>
    <property type="project" value="SGD"/>
</dbReference>